<name>DAPE_METPP</name>
<sequence>MSALPPTALALAEQLIARASVTPEDAGCQALVVQRLQAQGFDCHTLESGPDDFRVTNLWAVRRGRSADGFTLVFAGHTDVVPTGPLERWTSDPFVPSHRDGRLYGRGAADMKTSIACMVVAIEEFVAAYPRHAGSIALLLTSDEEGPALDGTTQVVRWLQARGERLDGCIVGEPTSVNAVGDMIKNGRRGSLSGRLVVQGVQGHIAYPHLAKNPIHAVAPALAELVQVVWDGGNEHFPPTSWQVSNLHAGTGASNVIPGEAVVDFNFRFSTESTPETLQQRLAAVLDRHGLQYTIDWTLGGRPFLTRPGSLTEALGSAILQVTGRTTELSTTGGTSDGRFIATVCPQVVECGPVNASIHQIDEHVAVAEIEPLKEIYRSTLERLVA</sequence>
<gene>
    <name evidence="1" type="primary">dapE</name>
    <name type="ordered locus">Mpe_A1804</name>
</gene>
<organism>
    <name type="scientific">Methylibium petroleiphilum (strain ATCC BAA-1232 / LMG 22953 / PM1)</name>
    <dbReference type="NCBI Taxonomy" id="420662"/>
    <lineage>
        <taxon>Bacteria</taxon>
        <taxon>Pseudomonadati</taxon>
        <taxon>Pseudomonadota</taxon>
        <taxon>Betaproteobacteria</taxon>
        <taxon>Burkholderiales</taxon>
        <taxon>Sphaerotilaceae</taxon>
        <taxon>Methylibium</taxon>
    </lineage>
</organism>
<evidence type="ECO:0000255" key="1">
    <source>
        <dbReference type="HAMAP-Rule" id="MF_01690"/>
    </source>
</evidence>
<proteinExistence type="inferred from homology"/>
<comment type="function">
    <text evidence="1">Catalyzes the hydrolysis of N-succinyl-L,L-diaminopimelic acid (SDAP), forming succinate and LL-2,6-diaminopimelate (DAP), an intermediate involved in the bacterial biosynthesis of lysine and meso-diaminopimelic acid, an essential component of bacterial cell walls.</text>
</comment>
<comment type="catalytic activity">
    <reaction evidence="1">
        <text>N-succinyl-(2S,6S)-2,6-diaminopimelate + H2O = (2S,6S)-2,6-diaminopimelate + succinate</text>
        <dbReference type="Rhea" id="RHEA:22608"/>
        <dbReference type="ChEBI" id="CHEBI:15377"/>
        <dbReference type="ChEBI" id="CHEBI:30031"/>
        <dbReference type="ChEBI" id="CHEBI:57609"/>
        <dbReference type="ChEBI" id="CHEBI:58087"/>
        <dbReference type="EC" id="3.5.1.18"/>
    </reaction>
</comment>
<comment type="cofactor">
    <cofactor evidence="1">
        <name>Zn(2+)</name>
        <dbReference type="ChEBI" id="CHEBI:29105"/>
    </cofactor>
    <cofactor evidence="1">
        <name>Co(2+)</name>
        <dbReference type="ChEBI" id="CHEBI:48828"/>
    </cofactor>
    <text evidence="1">Binds 2 Zn(2+) or Co(2+) ions per subunit.</text>
</comment>
<comment type="pathway">
    <text evidence="1">Amino-acid biosynthesis; L-lysine biosynthesis via DAP pathway; LL-2,6-diaminopimelate from (S)-tetrahydrodipicolinate (succinylase route): step 3/3.</text>
</comment>
<comment type="subunit">
    <text evidence="1">Homodimer.</text>
</comment>
<comment type="similarity">
    <text evidence="1">Belongs to the peptidase M20A family. DapE subfamily.</text>
</comment>
<dbReference type="EC" id="3.5.1.18" evidence="1"/>
<dbReference type="EMBL" id="CP000555">
    <property type="protein sequence ID" value="ABM94763.1"/>
    <property type="molecule type" value="Genomic_DNA"/>
</dbReference>
<dbReference type="SMR" id="A2SGS4"/>
<dbReference type="STRING" id="420662.Mpe_A1804"/>
<dbReference type="KEGG" id="mpt:Mpe_A1804"/>
<dbReference type="eggNOG" id="COG0624">
    <property type="taxonomic scope" value="Bacteria"/>
</dbReference>
<dbReference type="HOGENOM" id="CLU_021802_4_0_4"/>
<dbReference type="UniPathway" id="UPA00034">
    <property type="reaction ID" value="UER00021"/>
</dbReference>
<dbReference type="Proteomes" id="UP000000366">
    <property type="component" value="Chromosome"/>
</dbReference>
<dbReference type="GO" id="GO:0008777">
    <property type="term" value="F:acetylornithine deacetylase activity"/>
    <property type="evidence" value="ECO:0007669"/>
    <property type="project" value="TreeGrafter"/>
</dbReference>
<dbReference type="GO" id="GO:0050897">
    <property type="term" value="F:cobalt ion binding"/>
    <property type="evidence" value="ECO:0007669"/>
    <property type="project" value="UniProtKB-UniRule"/>
</dbReference>
<dbReference type="GO" id="GO:0009014">
    <property type="term" value="F:succinyl-diaminopimelate desuccinylase activity"/>
    <property type="evidence" value="ECO:0007669"/>
    <property type="project" value="UniProtKB-UniRule"/>
</dbReference>
<dbReference type="GO" id="GO:0008270">
    <property type="term" value="F:zinc ion binding"/>
    <property type="evidence" value="ECO:0007669"/>
    <property type="project" value="UniProtKB-UniRule"/>
</dbReference>
<dbReference type="GO" id="GO:0019877">
    <property type="term" value="P:diaminopimelate biosynthetic process"/>
    <property type="evidence" value="ECO:0007669"/>
    <property type="project" value="UniProtKB-UniRule"/>
</dbReference>
<dbReference type="GO" id="GO:0006526">
    <property type="term" value="P:L-arginine biosynthetic process"/>
    <property type="evidence" value="ECO:0007669"/>
    <property type="project" value="TreeGrafter"/>
</dbReference>
<dbReference type="GO" id="GO:0009089">
    <property type="term" value="P:lysine biosynthetic process via diaminopimelate"/>
    <property type="evidence" value="ECO:0007669"/>
    <property type="project" value="UniProtKB-UniRule"/>
</dbReference>
<dbReference type="CDD" id="cd03891">
    <property type="entry name" value="M20_DapE_proteobac"/>
    <property type="match status" value="1"/>
</dbReference>
<dbReference type="FunFam" id="3.30.70.360:FF:000011">
    <property type="entry name" value="Succinyl-diaminopimelate desuccinylase"/>
    <property type="match status" value="1"/>
</dbReference>
<dbReference type="FunFam" id="3.40.630.10:FF:000005">
    <property type="entry name" value="Succinyl-diaminopimelate desuccinylase"/>
    <property type="match status" value="1"/>
</dbReference>
<dbReference type="Gene3D" id="3.40.630.10">
    <property type="entry name" value="Zn peptidases"/>
    <property type="match status" value="2"/>
</dbReference>
<dbReference type="HAMAP" id="MF_01690">
    <property type="entry name" value="DapE"/>
    <property type="match status" value="1"/>
</dbReference>
<dbReference type="InterPro" id="IPR036264">
    <property type="entry name" value="Bact_exopeptidase_dim_dom"/>
</dbReference>
<dbReference type="InterPro" id="IPR005941">
    <property type="entry name" value="DapE_proteobac"/>
</dbReference>
<dbReference type="InterPro" id="IPR002933">
    <property type="entry name" value="Peptidase_M20"/>
</dbReference>
<dbReference type="InterPro" id="IPR011650">
    <property type="entry name" value="Peptidase_M20_dimer"/>
</dbReference>
<dbReference type="InterPro" id="IPR050072">
    <property type="entry name" value="Peptidase_M20A"/>
</dbReference>
<dbReference type="NCBIfam" id="TIGR01246">
    <property type="entry name" value="dapE_proteo"/>
    <property type="match status" value="1"/>
</dbReference>
<dbReference type="NCBIfam" id="NF009557">
    <property type="entry name" value="PRK13009.1"/>
    <property type="match status" value="1"/>
</dbReference>
<dbReference type="PANTHER" id="PTHR43808">
    <property type="entry name" value="ACETYLORNITHINE DEACETYLASE"/>
    <property type="match status" value="1"/>
</dbReference>
<dbReference type="PANTHER" id="PTHR43808:SF31">
    <property type="entry name" value="N-ACETYL-L-CITRULLINE DEACETYLASE"/>
    <property type="match status" value="1"/>
</dbReference>
<dbReference type="Pfam" id="PF07687">
    <property type="entry name" value="M20_dimer"/>
    <property type="match status" value="1"/>
</dbReference>
<dbReference type="Pfam" id="PF01546">
    <property type="entry name" value="Peptidase_M20"/>
    <property type="match status" value="1"/>
</dbReference>
<dbReference type="SUPFAM" id="SSF55031">
    <property type="entry name" value="Bacterial exopeptidase dimerisation domain"/>
    <property type="match status" value="1"/>
</dbReference>
<dbReference type="SUPFAM" id="SSF53187">
    <property type="entry name" value="Zn-dependent exopeptidases"/>
    <property type="match status" value="1"/>
</dbReference>
<protein>
    <recommendedName>
        <fullName evidence="1">Succinyl-diaminopimelate desuccinylase</fullName>
        <shortName evidence="1">SDAP desuccinylase</shortName>
        <ecNumber evidence="1">3.5.1.18</ecNumber>
    </recommendedName>
    <alternativeName>
        <fullName evidence="1">N-succinyl-LL-2,6-diaminoheptanedioate amidohydrolase</fullName>
    </alternativeName>
</protein>
<accession>A2SGS4</accession>
<reference key="1">
    <citation type="journal article" date="2007" name="J. Bacteriol.">
        <title>Whole-genome analysis of the methyl tert-butyl ether-degrading beta-proteobacterium Methylibium petroleiphilum PM1.</title>
        <authorList>
            <person name="Kane S.R."/>
            <person name="Chakicherla A.Y."/>
            <person name="Chain P.S.G."/>
            <person name="Schmidt R."/>
            <person name="Shin M.W."/>
            <person name="Legler T.C."/>
            <person name="Scow K.M."/>
            <person name="Larimer F.W."/>
            <person name="Lucas S.M."/>
            <person name="Richardson P.M."/>
            <person name="Hristova K.R."/>
        </authorList>
    </citation>
    <scope>NUCLEOTIDE SEQUENCE [LARGE SCALE GENOMIC DNA]</scope>
    <source>
        <strain>ATCC BAA-1232 / LMG 22953 / PM1</strain>
    </source>
</reference>
<keyword id="KW-0028">Amino-acid biosynthesis</keyword>
<keyword id="KW-0170">Cobalt</keyword>
<keyword id="KW-0220">Diaminopimelate biosynthesis</keyword>
<keyword id="KW-0378">Hydrolase</keyword>
<keyword id="KW-0457">Lysine biosynthesis</keyword>
<keyword id="KW-0479">Metal-binding</keyword>
<keyword id="KW-1185">Reference proteome</keyword>
<keyword id="KW-0862">Zinc</keyword>
<feature type="chain" id="PRO_0000375610" description="Succinyl-diaminopimelate desuccinylase">
    <location>
        <begin position="1"/>
        <end position="386"/>
    </location>
</feature>
<feature type="active site" evidence="1">
    <location>
        <position position="79"/>
    </location>
</feature>
<feature type="active site" description="Proton acceptor" evidence="1">
    <location>
        <position position="144"/>
    </location>
</feature>
<feature type="binding site" evidence="1">
    <location>
        <position position="77"/>
    </location>
    <ligand>
        <name>Zn(2+)</name>
        <dbReference type="ChEBI" id="CHEBI:29105"/>
        <label>1</label>
    </ligand>
</feature>
<feature type="binding site" evidence="1">
    <location>
        <position position="110"/>
    </location>
    <ligand>
        <name>Zn(2+)</name>
        <dbReference type="ChEBI" id="CHEBI:29105"/>
        <label>1</label>
    </ligand>
</feature>
<feature type="binding site" evidence="1">
    <location>
        <position position="110"/>
    </location>
    <ligand>
        <name>Zn(2+)</name>
        <dbReference type="ChEBI" id="CHEBI:29105"/>
        <label>2</label>
    </ligand>
</feature>
<feature type="binding site" evidence="1">
    <location>
        <position position="145"/>
    </location>
    <ligand>
        <name>Zn(2+)</name>
        <dbReference type="ChEBI" id="CHEBI:29105"/>
        <label>2</label>
    </ligand>
</feature>
<feature type="binding site" evidence="1">
    <location>
        <position position="173"/>
    </location>
    <ligand>
        <name>Zn(2+)</name>
        <dbReference type="ChEBI" id="CHEBI:29105"/>
        <label>1</label>
    </ligand>
</feature>
<feature type="binding site" evidence="1">
    <location>
        <position position="359"/>
    </location>
    <ligand>
        <name>Zn(2+)</name>
        <dbReference type="ChEBI" id="CHEBI:29105"/>
        <label>2</label>
    </ligand>
</feature>